<dbReference type="EC" id="3.4.21.-"/>
<dbReference type="EMBL" id="LC037233">
    <property type="protein sequence ID" value="BAR64199.1"/>
    <property type="molecule type" value="mRNA"/>
</dbReference>
<dbReference type="EMBL" id="LC043101">
    <property type="protein sequence ID" value="BAR64200.1"/>
    <property type="molecule type" value="mRNA"/>
</dbReference>
<dbReference type="EMBL" id="CU329670">
    <property type="protein sequence ID" value="CAB62415.1"/>
    <property type="status" value="ALT_SEQ"/>
    <property type="molecule type" value="Genomic_DNA"/>
</dbReference>
<dbReference type="EMBL" id="D89145">
    <property type="protein sequence ID" value="BAA13807.1"/>
    <property type="molecule type" value="mRNA"/>
</dbReference>
<dbReference type="PIR" id="T42421">
    <property type="entry name" value="T42421"/>
</dbReference>
<dbReference type="PIR" id="T50074">
    <property type="entry name" value="T50074"/>
</dbReference>
<dbReference type="SMR" id="Q9UTK4"/>
<dbReference type="BioGRID" id="278047">
    <property type="interactions" value="5"/>
</dbReference>
<dbReference type="FunCoup" id="Q9UTK4">
    <property type="interactions" value="793"/>
</dbReference>
<dbReference type="IntAct" id="Q9UTK4">
    <property type="interactions" value="3"/>
</dbReference>
<dbReference type="STRING" id="284812.Q9UTK4"/>
<dbReference type="MEROPS" id="S59.A07"/>
<dbReference type="iPTMnet" id="Q9UTK4"/>
<dbReference type="PaxDb" id="4896-SPAC1486.05.1"/>
<dbReference type="PomBase" id="SPAC1486.05">
    <property type="gene designation" value="nup189"/>
</dbReference>
<dbReference type="eggNOG" id="KOG0845">
    <property type="taxonomic scope" value="Eukaryota"/>
</dbReference>
<dbReference type="HOGENOM" id="CLU_002330_0_0_1"/>
<dbReference type="InParanoid" id="Q9UTK4"/>
<dbReference type="PhylomeDB" id="Q9UTK4"/>
<dbReference type="Reactome" id="R-SPO-159227">
    <property type="pathway name" value="Transport of the SLBP independent Mature mRNA"/>
</dbReference>
<dbReference type="Reactome" id="R-SPO-159231">
    <property type="pathway name" value="Transport of Mature mRNA Derived from an Intronless Transcript"/>
</dbReference>
<dbReference type="Reactome" id="R-SPO-159236">
    <property type="pathway name" value="Transport of Mature mRNA derived from an Intron-Containing Transcript"/>
</dbReference>
<dbReference type="Reactome" id="R-SPO-3371453">
    <property type="pathway name" value="Regulation of HSF1-mediated heat shock response"/>
</dbReference>
<dbReference type="Reactome" id="R-SPO-4085377">
    <property type="pathway name" value="SUMOylation of SUMOylation proteins"/>
</dbReference>
<dbReference type="Reactome" id="R-SPO-4551638">
    <property type="pathway name" value="SUMOylation of chromatin organization proteins"/>
</dbReference>
<dbReference type="Reactome" id="R-SPO-4570464">
    <property type="pathway name" value="SUMOylation of RNA binding proteins"/>
</dbReference>
<dbReference type="Reactome" id="R-SPO-5578749">
    <property type="pathway name" value="Transcriptional regulation by small RNAs"/>
</dbReference>
<dbReference type="Reactome" id="R-SPO-9615933">
    <property type="pathway name" value="Postmitotic nuclear pore complex (NPC) reformation"/>
</dbReference>
<dbReference type="PRO" id="PR:Q9UTK4"/>
<dbReference type="Proteomes" id="UP000002485">
    <property type="component" value="Chromosome I"/>
</dbReference>
<dbReference type="GO" id="GO:0031965">
    <property type="term" value="C:nuclear membrane"/>
    <property type="evidence" value="ECO:0000314"/>
    <property type="project" value="PomBase"/>
</dbReference>
<dbReference type="GO" id="GO:0034399">
    <property type="term" value="C:nuclear periphery"/>
    <property type="evidence" value="ECO:0000314"/>
    <property type="project" value="PomBase"/>
</dbReference>
<dbReference type="GO" id="GO:0005643">
    <property type="term" value="C:nuclear pore"/>
    <property type="evidence" value="ECO:0000314"/>
    <property type="project" value="PomBase"/>
</dbReference>
<dbReference type="GO" id="GO:0044614">
    <property type="term" value="C:nuclear pore cytoplasmic filaments"/>
    <property type="evidence" value="ECO:0000318"/>
    <property type="project" value="GO_Central"/>
</dbReference>
<dbReference type="GO" id="GO:0031080">
    <property type="term" value="C:nuclear pore outer ring"/>
    <property type="evidence" value="ECO:0000314"/>
    <property type="project" value="PomBase"/>
</dbReference>
<dbReference type="GO" id="GO:0008139">
    <property type="term" value="F:nuclear localization sequence binding"/>
    <property type="evidence" value="ECO:0000318"/>
    <property type="project" value="GO_Central"/>
</dbReference>
<dbReference type="GO" id="GO:0008233">
    <property type="term" value="F:peptidase activity"/>
    <property type="evidence" value="ECO:0000269"/>
    <property type="project" value="PomBase"/>
</dbReference>
<dbReference type="GO" id="GO:0003723">
    <property type="term" value="F:RNA binding"/>
    <property type="evidence" value="ECO:0000318"/>
    <property type="project" value="GO_Central"/>
</dbReference>
<dbReference type="GO" id="GO:0017056">
    <property type="term" value="F:structural constituent of nuclear pore"/>
    <property type="evidence" value="ECO:0000318"/>
    <property type="project" value="GO_Central"/>
</dbReference>
<dbReference type="GO" id="GO:0051028">
    <property type="term" value="P:mRNA transport"/>
    <property type="evidence" value="ECO:0007669"/>
    <property type="project" value="UniProtKB-KW"/>
</dbReference>
<dbReference type="GO" id="GO:0000973">
    <property type="term" value="P:post-transcriptional tethering of RNA polymerase II gene DNA at nuclear periphery"/>
    <property type="evidence" value="ECO:0000318"/>
    <property type="project" value="GO_Central"/>
</dbReference>
<dbReference type="GO" id="GO:0006606">
    <property type="term" value="P:protein import into nucleus"/>
    <property type="evidence" value="ECO:0000318"/>
    <property type="project" value="GO_Central"/>
</dbReference>
<dbReference type="GO" id="GO:0000054">
    <property type="term" value="P:ribosomal subunit export from nucleus"/>
    <property type="evidence" value="ECO:0000266"/>
    <property type="project" value="PomBase"/>
</dbReference>
<dbReference type="GO" id="GO:0006405">
    <property type="term" value="P:RNA export from nucleus"/>
    <property type="evidence" value="ECO:0000318"/>
    <property type="project" value="GO_Central"/>
</dbReference>
<dbReference type="GO" id="GO:0034398">
    <property type="term" value="P:telomere tethering at nuclear periphery"/>
    <property type="evidence" value="ECO:0000318"/>
    <property type="project" value="GO_Central"/>
</dbReference>
<dbReference type="FunFam" id="1.10.10.2360:FF:000001">
    <property type="entry name" value="Nuclear pore complex protein Nup98-Nup96"/>
    <property type="match status" value="1"/>
</dbReference>
<dbReference type="FunFam" id="1.25.40.690:FF:000003">
    <property type="entry name" value="Nucleoporin SONB, putative"/>
    <property type="match status" value="1"/>
</dbReference>
<dbReference type="FunFam" id="3.30.1610.10:FF:000003">
    <property type="entry name" value="Nucleoporin SONB, putative"/>
    <property type="match status" value="1"/>
</dbReference>
<dbReference type="Gene3D" id="1.10.10.2360">
    <property type="match status" value="1"/>
</dbReference>
<dbReference type="Gene3D" id="1.25.40.690">
    <property type="match status" value="1"/>
</dbReference>
<dbReference type="Gene3D" id="3.30.1610.10">
    <property type="entry name" value="Peptidase S59, nucleoporin"/>
    <property type="match status" value="1"/>
</dbReference>
<dbReference type="InterPro" id="IPR025574">
    <property type="entry name" value="Nucleoporin_FG_rpt"/>
</dbReference>
<dbReference type="InterPro" id="IPR037665">
    <property type="entry name" value="Nucleoporin_S59-like"/>
</dbReference>
<dbReference type="InterPro" id="IPR007230">
    <property type="entry name" value="Nup98_auto-Pept-S59_dom"/>
</dbReference>
<dbReference type="InterPro" id="IPR036903">
    <property type="entry name" value="Nup98_auto-Pept-S59_dom_sf"/>
</dbReference>
<dbReference type="InterPro" id="IPR021967">
    <property type="entry name" value="Nup98_C"/>
</dbReference>
<dbReference type="PANTHER" id="PTHR23198:SF6">
    <property type="entry name" value="NUCLEAR PORE COMPLEX PROTEIN NUP98-NUP96"/>
    <property type="match status" value="1"/>
</dbReference>
<dbReference type="PANTHER" id="PTHR23198">
    <property type="entry name" value="NUCLEOPORIN"/>
    <property type="match status" value="1"/>
</dbReference>
<dbReference type="Pfam" id="PF04096">
    <property type="entry name" value="Nucleoporin2"/>
    <property type="match status" value="1"/>
</dbReference>
<dbReference type="Pfam" id="PF13634">
    <property type="entry name" value="Nucleoporin_FG"/>
    <property type="match status" value="4"/>
</dbReference>
<dbReference type="Pfam" id="PF12110">
    <property type="entry name" value="Nup96"/>
    <property type="match status" value="1"/>
</dbReference>
<dbReference type="SUPFAM" id="SSF82215">
    <property type="entry name" value="C-terminal autoproteolytic domain of nucleoporin nup98"/>
    <property type="match status" value="1"/>
</dbReference>
<dbReference type="PROSITE" id="PS51434">
    <property type="entry name" value="NUP_C"/>
    <property type="match status" value="1"/>
</dbReference>
<name>NU189_SCHPO</name>
<comment type="function">
    <text evidence="1 5 9">Functions as a component of the nuclear pore complex (NPC). NPC components, collectively referred to as nucleoporins (NUPs), can play the role of both NPC structural components and of docking or interaction partners for transiently associated nuclear transport factors. Active directional transport is assured by both, a Phe-Gly (FG) repeat affinity gradient for these transport factors across the NPC and a transport cofactor concentration gradient across the nuclear envelope (PubMed:15116432). Nup189 is autocatalytically cleaved in vivo in 2 polypeptides which assume different functions in the NPC (PubMed:26137436). Nup98 as one of the FG repeat nucleoporins participates in karyopherin interactions and contains part of the autocatalytic cleavage activity. Nup96 as part of the NUP84 complex is involved in nuclear poly(A)+ RNA and tRNA export (By similarity).</text>
</comment>
<comment type="subunit">
    <molecule>Nucleoporin nup98</molecule>
    <text evidence="6 7">Interacts (via G-L-F-G repeats) with rpn15/dss1 (PubMed:15990877). Interacts with raf1 (PubMed:16157682).</text>
</comment>
<comment type="subunit">
    <molecule>Nucleoporin nup96</molecule>
    <text evidence="4">Interacts with ned1 (PubMed:12376568).</text>
</comment>
<comment type="subcellular location">
    <molecule>Nucleoporin nup98</molecule>
    <subcellularLocation>
        <location evidence="9">Nucleus</location>
        <location evidence="9">Nuclear pore complex</location>
    </subcellularLocation>
</comment>
<comment type="subcellular location">
    <molecule>Nucleoporin nup96</molecule>
    <subcellularLocation>
        <location evidence="5 9">Nucleus</location>
        <location evidence="5 9">Nuclear pore complex</location>
    </subcellularLocation>
</comment>
<comment type="alternative products">
    <event type="alternative splicing"/>
    <isoform>
        <id>Q9UTK4-1</id>
        <name>1</name>
        <name evidence="10">long</name>
        <sequence type="displayed"/>
    </isoform>
    <isoform>
        <id>Q9UTK4-2</id>
        <name>2</name>
        <name evidence="10">short</name>
        <sequence type="described" ref="VSP_058774 VSP_058775"/>
    </isoform>
</comment>
<comment type="domain">
    <text evidence="11">Contains G-L-F-G repeats.</text>
</comment>
<comment type="PTM">
    <text evidence="9">Nup189 is autocatalytically cleaved in nup98 and nup96.</text>
</comment>
<comment type="similarity">
    <text evidence="11">Belongs to the nucleoporin GLFG family.</text>
</comment>
<comment type="sequence caution" evidence="11">
    <conflict type="erroneous gene model prediction">
        <sequence resource="EMBL-CDS" id="CAB62415"/>
    </conflict>
</comment>
<proteinExistence type="evidence at protein level"/>
<evidence type="ECO:0000250" key="1">
    <source>
        <dbReference type="UniProtKB" id="P49687"/>
    </source>
</evidence>
<evidence type="ECO:0000255" key="2">
    <source>
        <dbReference type="PROSITE-ProRule" id="PRU00765"/>
    </source>
</evidence>
<evidence type="ECO:0000256" key="3">
    <source>
        <dbReference type="SAM" id="MobiDB-lite"/>
    </source>
</evidence>
<evidence type="ECO:0000269" key="4">
    <source>
    </source>
</evidence>
<evidence type="ECO:0000269" key="5">
    <source>
    </source>
</evidence>
<evidence type="ECO:0000269" key="6">
    <source>
    </source>
</evidence>
<evidence type="ECO:0000269" key="7">
    <source>
    </source>
</evidence>
<evidence type="ECO:0000269" key="8">
    <source>
    </source>
</evidence>
<evidence type="ECO:0000269" key="9">
    <source>
    </source>
</evidence>
<evidence type="ECO:0000303" key="10">
    <source>
    </source>
</evidence>
<evidence type="ECO:0000305" key="11"/>
<evidence type="ECO:0000312" key="12">
    <source>
        <dbReference type="PomBase" id="SPAC1486.05"/>
    </source>
</evidence>
<protein>
    <recommendedName>
        <fullName>Nucleoporin nup189</fullName>
        <ecNumber>3.4.21.-</ecNumber>
    </recommendedName>
    <alternativeName>
        <fullName>Nuclear pore protein nup189</fullName>
    </alternativeName>
    <component>
        <recommendedName>
            <fullName>Nucleoporin nup98</fullName>
        </recommendedName>
    </component>
    <component>
        <recommendedName>
            <fullName>Nucleoporin nup96</fullName>
        </recommendedName>
    </component>
</protein>
<gene>
    <name type="primary">nup189</name>
    <name type="synonym">nup96</name>
    <name type="synonym">nup98</name>
    <name evidence="12" type="ORF">SPAC1486.05</name>
</gene>
<reference key="1">
    <citation type="journal article" date="2015" name="FEBS Open Bio">
        <title>Uncleavable Nup98-Nup96 is functional in the fission yeast Schizosaccharomyces pombe.</title>
        <authorList>
            <person name="Asakawa H."/>
            <person name="Mori C."/>
            <person name="Ohtsuki C."/>
            <person name="Iwamoto M."/>
            <person name="Hiraoka Y."/>
            <person name="Haraguchi T."/>
        </authorList>
    </citation>
    <scope>NUCLEOTIDE SEQUENCE [MRNA] (ISOFORMS 1 AND 2)</scope>
    <scope>AUTOCATALYTIC CLEAVAGE</scope>
    <scope>MUTAGENESIS OF SER-964</scope>
    <scope>SUBCELLULAR LOCATION</scope>
    <source>
        <strain>ATCC 38364 / 968</strain>
    </source>
</reference>
<reference key="2">
    <citation type="journal article" date="2002" name="Nature">
        <title>The genome sequence of Schizosaccharomyces pombe.</title>
        <authorList>
            <person name="Wood V."/>
            <person name="Gwilliam R."/>
            <person name="Rajandream M.A."/>
            <person name="Lyne M.H."/>
            <person name="Lyne R."/>
            <person name="Stewart A."/>
            <person name="Sgouros J.G."/>
            <person name="Peat N."/>
            <person name="Hayles J."/>
            <person name="Baker S.G."/>
            <person name="Basham D."/>
            <person name="Bowman S."/>
            <person name="Brooks K."/>
            <person name="Brown D."/>
            <person name="Brown S."/>
            <person name="Chillingworth T."/>
            <person name="Churcher C.M."/>
            <person name="Collins M."/>
            <person name="Connor R."/>
            <person name="Cronin A."/>
            <person name="Davis P."/>
            <person name="Feltwell T."/>
            <person name="Fraser A."/>
            <person name="Gentles S."/>
            <person name="Goble A."/>
            <person name="Hamlin N."/>
            <person name="Harris D.E."/>
            <person name="Hidalgo J."/>
            <person name="Hodgson G."/>
            <person name="Holroyd S."/>
            <person name="Hornsby T."/>
            <person name="Howarth S."/>
            <person name="Huckle E.J."/>
            <person name="Hunt S."/>
            <person name="Jagels K."/>
            <person name="James K.D."/>
            <person name="Jones L."/>
            <person name="Jones M."/>
            <person name="Leather S."/>
            <person name="McDonald S."/>
            <person name="McLean J."/>
            <person name="Mooney P."/>
            <person name="Moule S."/>
            <person name="Mungall K.L."/>
            <person name="Murphy L.D."/>
            <person name="Niblett D."/>
            <person name="Odell C."/>
            <person name="Oliver K."/>
            <person name="O'Neil S."/>
            <person name="Pearson D."/>
            <person name="Quail M.A."/>
            <person name="Rabbinowitsch E."/>
            <person name="Rutherford K.M."/>
            <person name="Rutter S."/>
            <person name="Saunders D."/>
            <person name="Seeger K."/>
            <person name="Sharp S."/>
            <person name="Skelton J."/>
            <person name="Simmonds M.N."/>
            <person name="Squares R."/>
            <person name="Squares S."/>
            <person name="Stevens K."/>
            <person name="Taylor K."/>
            <person name="Taylor R.G."/>
            <person name="Tivey A."/>
            <person name="Walsh S.V."/>
            <person name="Warren T."/>
            <person name="Whitehead S."/>
            <person name="Woodward J.R."/>
            <person name="Volckaert G."/>
            <person name="Aert R."/>
            <person name="Robben J."/>
            <person name="Grymonprez B."/>
            <person name="Weltjens I."/>
            <person name="Vanstreels E."/>
            <person name="Rieger M."/>
            <person name="Schaefer M."/>
            <person name="Mueller-Auer S."/>
            <person name="Gabel C."/>
            <person name="Fuchs M."/>
            <person name="Duesterhoeft A."/>
            <person name="Fritzc C."/>
            <person name="Holzer E."/>
            <person name="Moestl D."/>
            <person name="Hilbert H."/>
            <person name="Borzym K."/>
            <person name="Langer I."/>
            <person name="Beck A."/>
            <person name="Lehrach H."/>
            <person name="Reinhardt R."/>
            <person name="Pohl T.M."/>
            <person name="Eger P."/>
            <person name="Zimmermann W."/>
            <person name="Wedler H."/>
            <person name="Wambutt R."/>
            <person name="Purnelle B."/>
            <person name="Goffeau A."/>
            <person name="Cadieu E."/>
            <person name="Dreano S."/>
            <person name="Gloux S."/>
            <person name="Lelaure V."/>
            <person name="Mottier S."/>
            <person name="Galibert F."/>
            <person name="Aves S.J."/>
            <person name="Xiang Z."/>
            <person name="Hunt C."/>
            <person name="Moore K."/>
            <person name="Hurst S.M."/>
            <person name="Lucas M."/>
            <person name="Rochet M."/>
            <person name="Gaillardin C."/>
            <person name="Tallada V.A."/>
            <person name="Garzon A."/>
            <person name="Thode G."/>
            <person name="Daga R.R."/>
            <person name="Cruzado L."/>
            <person name="Jimenez J."/>
            <person name="Sanchez M."/>
            <person name="del Rey F."/>
            <person name="Benito J."/>
            <person name="Dominguez A."/>
            <person name="Revuelta J.L."/>
            <person name="Moreno S."/>
            <person name="Armstrong J."/>
            <person name="Forsburg S.L."/>
            <person name="Cerutti L."/>
            <person name="Lowe T."/>
            <person name="McCombie W.R."/>
            <person name="Paulsen I."/>
            <person name="Potashkin J."/>
            <person name="Shpakovski G.V."/>
            <person name="Ussery D."/>
            <person name="Barrell B.G."/>
            <person name="Nurse P."/>
        </authorList>
    </citation>
    <scope>NUCLEOTIDE SEQUENCE [LARGE SCALE GENOMIC DNA]</scope>
    <source>
        <strain>972 / ATCC 24843</strain>
    </source>
</reference>
<reference key="3">
    <citation type="journal article" date="1997" name="DNA Res.">
        <title>Identification of open reading frames in Schizosaccharomyces pombe cDNAs.</title>
        <authorList>
            <person name="Yoshioka S."/>
            <person name="Kato K."/>
            <person name="Nakai K."/>
            <person name="Okayama H."/>
            <person name="Nojima H."/>
        </authorList>
    </citation>
    <scope>NUCLEOTIDE SEQUENCE [LARGE SCALE MRNA] OF 1457-1807</scope>
    <source>
        <strain>PR745</strain>
    </source>
</reference>
<reference key="4">
    <citation type="journal article" date="2004" name="Mol. Cell. Biol.">
        <title>The fission yeast Nup107-120 complex functionally interacts with the small GTPase Ran/Spi1 and is required for mRNA export, nuclear pore distribution, and proper cell division.</title>
        <authorList>
            <person name="Bai S.W."/>
            <person name="Rouquette J."/>
            <person name="Umeda M."/>
            <person name="Faigle W."/>
            <person name="Loew D."/>
            <person name="Sazer S."/>
            <person name="Doye V."/>
        </authorList>
    </citation>
    <scope>PARTIAL PROTEIN SEQUENCE</scope>
    <scope>IDENTIFICATION BY MASS SPECTROMETRY</scope>
</reference>
<reference key="5">
    <citation type="journal article" date="2002" name="J. Cell Sci.">
        <title>An evolutionarily conserved fission yeast protein, Ned1, implicated in normal nuclear morphology and chromosome stability, interacts with Dis3, Pim1/RCC1 and an essential nucleoporin.</title>
        <authorList>
            <person name="Tange Y."/>
            <person name="Hirata A."/>
            <person name="Niwa O."/>
        </authorList>
    </citation>
    <scope>IDENTIFICATION</scope>
    <scope>INTERACTION WITH NED1</scope>
</reference>
<reference key="6">
    <citation type="journal article" date="2004" name="Yeast">
        <title>Identification of genes encoding putative nucleoporins and transport factors in the fission yeast Schizosaccharomyces pombe: a deletion analysis.</title>
        <authorList>
            <person name="Chen X.Q."/>
            <person name="Du X."/>
            <person name="Liu J."/>
            <person name="Balasubramanian M.K."/>
            <person name="Balasundaram D."/>
        </authorList>
    </citation>
    <scope>FUNCTION</scope>
    <scope>SUBCELLULAR LOCATION</scope>
</reference>
<reference key="7">
    <citation type="journal article" date="2005" name="EMBO J.">
        <title>Homolog of BRCA2-interacting Dss1p and Uap56p link Mlo3p and Rae1p for mRNA export in fission yeast.</title>
        <authorList>
            <person name="Thakurta A.G."/>
            <person name="Gopal G."/>
            <person name="Yoon J.H."/>
            <person name="Kozak L."/>
            <person name="Dhar R."/>
        </authorList>
    </citation>
    <scope>INTERACTION WITH RPN15</scope>
</reference>
<reference key="8">
    <citation type="journal article" date="2005" name="Genetics">
        <title>The Clr7 and Clr8 directionality factors and the Pcu4 cullin mediate heterochromatin formation in the fission yeast Schizosaccharomyces pombe.</title>
        <authorList>
            <person name="Thon G."/>
            <person name="Hansen K.R."/>
            <person name="Altes S.P."/>
            <person name="Sidhu D."/>
            <person name="Singh G."/>
            <person name="Verhein-Hansen J."/>
            <person name="Bonaduce M.J."/>
            <person name="Klar A.J."/>
        </authorList>
    </citation>
    <scope>INTERACTION WITH RAF1</scope>
</reference>
<reference key="9">
    <citation type="journal article" date="2008" name="J. Proteome Res.">
        <title>Phosphoproteome analysis of fission yeast.</title>
        <authorList>
            <person name="Wilson-Grady J.T."/>
            <person name="Villen J."/>
            <person name="Gygi S.P."/>
        </authorList>
    </citation>
    <scope>PHOSPHORYLATION [LARGE SCALE ANALYSIS] AT SER-724 AND SER-1051</scope>
    <scope>IDENTIFICATION BY MASS SPECTROMETRY</scope>
</reference>
<feature type="chain" id="PRO_0000204857" description="Nucleoporin nup98">
    <location>
        <begin position="1"/>
        <end position="963"/>
    </location>
</feature>
<feature type="chain" id="PRO_0000438989" description="Nucleoporin nup96">
    <location>
        <begin position="964"/>
        <end position="1807"/>
    </location>
</feature>
<feature type="repeat" description="GLFG 1" evidence="11">
    <location>
        <begin position="26"/>
        <end position="29"/>
    </location>
</feature>
<feature type="repeat" description="GLFG 2" evidence="11">
    <location>
        <begin position="66"/>
        <end position="69"/>
    </location>
</feature>
<feature type="repeat" description="GLFG 3" evidence="11">
    <location>
        <begin position="112"/>
        <end position="115"/>
    </location>
</feature>
<feature type="repeat" description="GLFG 4" evidence="11">
    <location>
        <begin position="152"/>
        <end position="155"/>
    </location>
</feature>
<feature type="repeat" description="GLFG 5" evidence="11">
    <location>
        <begin position="177"/>
        <end position="180"/>
    </location>
</feature>
<feature type="repeat" description="GLFG 6" evidence="11">
    <location>
        <begin position="308"/>
        <end position="311"/>
    </location>
</feature>
<feature type="repeat" description="GLFG 7" evidence="11">
    <location>
        <begin position="335"/>
        <end position="338"/>
    </location>
</feature>
<feature type="repeat" description="GLFG 8" evidence="11">
    <location>
        <begin position="350"/>
        <end position="353"/>
    </location>
</feature>
<feature type="repeat" description="GLFG 9" evidence="11">
    <location>
        <begin position="381"/>
        <end position="384"/>
    </location>
</feature>
<feature type="repeat" description="GLFG 10" evidence="11">
    <location>
        <begin position="399"/>
        <end position="402"/>
    </location>
</feature>
<feature type="repeat" description="GLFG 11" evidence="11">
    <location>
        <begin position="435"/>
        <end position="438"/>
    </location>
</feature>
<feature type="repeat" description="GLFG 12" evidence="11">
    <location>
        <begin position="521"/>
        <end position="524"/>
    </location>
</feature>
<feature type="repeat" description="GLFG 13" evidence="11">
    <location>
        <begin position="585"/>
        <end position="588"/>
    </location>
</feature>
<feature type="repeat" description="GLFG 14" evidence="11">
    <location>
        <begin position="611"/>
        <end position="614"/>
    </location>
</feature>
<feature type="repeat" description="GLFG 15" evidence="11">
    <location>
        <begin position="627"/>
        <end position="630"/>
    </location>
</feature>
<feature type="repeat" description="GLFG 16" evidence="11">
    <location>
        <begin position="646"/>
        <end position="649"/>
    </location>
</feature>
<feature type="domain" description="Peptidase S59" evidence="2">
    <location>
        <begin position="822"/>
        <end position="963"/>
    </location>
</feature>
<feature type="region of interest" description="Disordered" evidence="3">
    <location>
        <begin position="1"/>
        <end position="118"/>
    </location>
</feature>
<feature type="region of interest" description="Disordered" evidence="3">
    <location>
        <begin position="565"/>
        <end position="685"/>
    </location>
</feature>
<feature type="region of interest" description="Disordered" evidence="3">
    <location>
        <begin position="785"/>
        <end position="814"/>
    </location>
</feature>
<feature type="region of interest" description="Disordered" evidence="3">
    <location>
        <begin position="974"/>
        <end position="1020"/>
    </location>
</feature>
<feature type="region of interest" description="Disordered" evidence="3">
    <location>
        <begin position="1082"/>
        <end position="1104"/>
    </location>
</feature>
<feature type="compositionally biased region" description="Polar residues" evidence="3">
    <location>
        <begin position="29"/>
        <end position="61"/>
    </location>
</feature>
<feature type="compositionally biased region" description="Low complexity" evidence="3">
    <location>
        <begin position="62"/>
        <end position="77"/>
    </location>
</feature>
<feature type="compositionally biased region" description="Gly residues" evidence="3">
    <location>
        <begin position="78"/>
        <end position="90"/>
    </location>
</feature>
<feature type="compositionally biased region" description="Polar residues" evidence="3">
    <location>
        <begin position="93"/>
        <end position="108"/>
    </location>
</feature>
<feature type="compositionally biased region" description="Polar residues" evidence="3">
    <location>
        <begin position="565"/>
        <end position="584"/>
    </location>
</feature>
<feature type="compositionally biased region" description="Low complexity" evidence="3">
    <location>
        <begin position="588"/>
        <end position="600"/>
    </location>
</feature>
<feature type="compositionally biased region" description="Polar residues" evidence="3">
    <location>
        <begin position="603"/>
        <end position="644"/>
    </location>
</feature>
<feature type="compositionally biased region" description="Low complexity" evidence="3">
    <location>
        <begin position="653"/>
        <end position="663"/>
    </location>
</feature>
<feature type="compositionally biased region" description="Polar residues" evidence="3">
    <location>
        <begin position="664"/>
        <end position="685"/>
    </location>
</feature>
<feature type="compositionally biased region" description="Basic and acidic residues" evidence="3">
    <location>
        <begin position="792"/>
        <end position="802"/>
    </location>
</feature>
<feature type="compositionally biased region" description="Low complexity" evidence="3">
    <location>
        <begin position="1094"/>
        <end position="1104"/>
    </location>
</feature>
<feature type="modified residue" description="Phosphoserine" evidence="8">
    <location>
        <position position="724"/>
    </location>
</feature>
<feature type="modified residue" description="Phosphoserine" evidence="8">
    <location>
        <position position="1051"/>
    </location>
</feature>
<feature type="splice variant" id="VSP_058774" description="In isoform 2." evidence="9">
    <original>YDQPNL</original>
    <variation>CISQRQ</variation>
    <location>
        <begin position="991"/>
        <end position="996"/>
    </location>
</feature>
<feature type="splice variant" id="VSP_058775" description="In isoform 2." evidence="9">
    <location>
        <begin position="997"/>
        <end position="1807"/>
    </location>
</feature>
<feature type="mutagenesis site" description="Prevents autocatalytic cleavage and produces a fully functional fusion protein." evidence="9">
    <original>S</original>
    <variation>A</variation>
    <location>
        <position position="964"/>
    </location>
</feature>
<organism>
    <name type="scientific">Schizosaccharomyces pombe (strain 972 / ATCC 24843)</name>
    <name type="common">Fission yeast</name>
    <dbReference type="NCBI Taxonomy" id="284812"/>
    <lineage>
        <taxon>Eukaryota</taxon>
        <taxon>Fungi</taxon>
        <taxon>Dikarya</taxon>
        <taxon>Ascomycota</taxon>
        <taxon>Taphrinomycotina</taxon>
        <taxon>Schizosaccharomycetes</taxon>
        <taxon>Schizosaccharomycetales</taxon>
        <taxon>Schizosaccharomycetaceae</taxon>
        <taxon>Schizosaccharomyces</taxon>
    </lineage>
</organism>
<keyword id="KW-0025">Alternative splicing</keyword>
<keyword id="KW-0068">Autocatalytic cleavage</keyword>
<keyword id="KW-0903">Direct protein sequencing</keyword>
<keyword id="KW-0378">Hydrolase</keyword>
<keyword id="KW-0509">mRNA transport</keyword>
<keyword id="KW-0906">Nuclear pore complex</keyword>
<keyword id="KW-0539">Nucleus</keyword>
<keyword id="KW-0597">Phosphoprotein</keyword>
<keyword id="KW-0653">Protein transport</keyword>
<keyword id="KW-1185">Reference proteome</keyword>
<keyword id="KW-0677">Repeat</keyword>
<keyword id="KW-0811">Translocation</keyword>
<keyword id="KW-0813">Transport</keyword>
<accession>Q9UTK4</accession>
<accession>A0A0E3VYD1</accession>
<accession>A0A0E4FZX7</accession>
<accession>P78796</accession>
<sequence>MFGQNNSSGFGGGTGAFGQNNQQTGGLFGSNSNTPGNTLFGSQNTSTTGFGQNTTQPLFGSNTNGGLFGNRNNTTTTGGTGFGMSSGTGMFGQSNTPAFGGTNNATNPSGGGLFGSNTANNNANTGTSFSFGSNAGSTGFGNTASNTGTGGGLFGSQNNAGNTAGNTGFGSQGTGGGLFGSSTTPATTNAFGTSGFVSSNANAVNGTANPPYAVTSEKDPQTNGTSVFQSITCMPAYRSYSFEELRLQDYNQGRRFGNASSTNTTSAFGSTPAFGASTTPFGQNLSGTTNNATPFGTSNATNTTPGSGLFGGGSAFGSNTTNTGFGSGTNNASGGLFGQNNNTTSTPSTGLFGGSTFNQQKPAFSGFGSTTNTTNTGTGTGLFGSNNATNTGTGQTTGGLFGGAATGTGTGFGSSTGGFGSNTNNQPNSGTMGTGLFGFGANNNTANNNTAPTSTFGGNNSSNFSFGANNNAATKPSGFGFGSTTTTPASGGFSFGQNANNAPKPAFGSTATTAPKPAGTGLFGGLGAGANTNTATNATGTGGSLFGNANTAGSNMFGSANSSTPGTGLFGSTQTNNATSNTGTGLFGSNNANTTNTGGSLFNKPSTTTGGLFGNTTAQQPSTTTSGLFGASNTNNQAQTSNFGTGLFGGSQAGQQQQPLQASIDQNPYGNNPLFSSTTSQVAPTSIQEPIASPLTSKPTPKKAASLPQFWLSPRSHNTARLASISSFAKSAVMNSTSASGKPKSLHLFDSLNDDVLLSADAFTPRQNIKKLVITHKISKDDILQNGVKNGNDAKSDSKVQEKAPQNEADGSLKKDEHVVLSDDYWMKPSIEELSKYPKEKLCSVHQFSVGRTGYGQVAFLKPVDLSGFEKLEDIPGKVVVFERKICAVYPVEGSSPPLGEGLNVPAIITLEKTWPLSRETREPIKDPQNPRYIQHVKRLHRIKDTEFIDFNDGKWIFKVQHFSRYGLLDDEEEENDMSSTSNEAGNLKKYDQPNLKVSGKNDSFVTHHTPGAFPNDSKNKELNRHFLKVDDSAPLDDTFMSKKVKLDFSSDSNVSERGDYDDNAKKVDEVISIEKVDGYSKENNVPLSEDDLSNSSESSNESVYSLVEESDASLAADNMDIEDISEESDREELSSMRFGAQDFHGLVVTDNWRDQLNLSVQRSALIKAAFPESQSNANLKNSRGIYYNEHDLVTDIFGNQNLDTDRPWQSLDKPGAFIPSKFHFTANGSCIYVLKSSDVKIRSIYDFIPTKDPNGTKLLEYQLDQTEVYLDLSGTHAASPRSSMTVKPLSLCSSGYESIVWDLTSILFDPKNYSLPSELSSEAREVLYQKLVRESLSEWITKTLEHETTTLAKEAETSEERIYILLTGNLIGQACEEAVQSQNNRLSTLIPLVNSDVDIQQEVKQQLEEWRKHGDLPFINKFTRLIFELLSGNTDIAEGCGTKGDEDYVQSIPITKNMTWLRAFGLKLWYNTDISIGEAMQLYVESLQKFPEIMQKPIATSAVQGIEVYDIIYLLLKAYAMGTSLEELTIPESAKCSPLNYRVVWQLAIYLSKARSLCDFSDRVVDINMAEDLKPISVHSDQLTLAYASQLEASGQWLWSLFVLLHLENVETRTSTITSCLARNLRGGLGAGAVEMIEKLCIPESWLNEAKALYARYVGDHLNELYFLQEAALYEDAHKVLLDTLAPQAVISGNKTQLKKALEGFNGQTDGLASWRFGGQIYSDYLDLLEGNFDANQELKLFTLRKISVALKELNATNLLQKAALHKISRFVNALCNEESLTDAICNLPLPLADSLANLQNISVQF</sequence>